<proteinExistence type="inferred from homology"/>
<name>11011_ASFK5</name>
<accession>P0C9J4</accession>
<feature type="chain" id="PRO_0000373216" description="Protein MGF 110-11L">
    <location>
        <begin position="1"/>
        <end position="275"/>
    </location>
</feature>
<feature type="transmembrane region" description="Helical" evidence="2">
    <location>
        <begin position="5"/>
        <end position="25"/>
    </location>
</feature>
<feature type="transmembrane region" description="Helical" evidence="2">
    <location>
        <begin position="127"/>
        <end position="147"/>
    </location>
</feature>
<feature type="transmembrane region" description="Helical" evidence="2">
    <location>
        <begin position="149"/>
        <end position="169"/>
    </location>
</feature>
<feature type="glycosylation site" description="N-linked (GlcNAc...) asparagine; by host" evidence="2">
    <location>
        <position position="61"/>
    </location>
</feature>
<sequence length="275" mass="32575">MKVLLGLLLGYSVLILTHELPDLSATQHPPKEELAYWCTYVKNCDFCWDCQNDICKNKITNESISINSIVNCRVTRDSIHQWCFYEISVKMPNHHNMECSLPRPYTGNEIFMEKWGGGDYWPIIIRHCCFYLVFSIAFVGYIVFAYHKNLHLNTTMKLLALLSILIWLSQPGLNRPLSIFYMKQNLPRTYTPPVRELEYWCTYGKHCHFCWECRHGICKNKVWDDMPFIKQNDYISQCSIARYFDRCMYFIKPKTPYIHYMDCSQPTAYEGFSHS</sequence>
<reference key="1">
    <citation type="submission" date="2003-03" db="EMBL/GenBank/DDBJ databases">
        <title>African swine fever virus genomes.</title>
        <authorList>
            <person name="Kutish G.F."/>
            <person name="Rock D.L."/>
        </authorList>
    </citation>
    <scope>NUCLEOTIDE SEQUENCE [LARGE SCALE GENOMIC DNA]</scope>
</reference>
<organism>
    <name type="scientific">African swine fever virus (isolate Pig/Kenya/KEN-50/1950)</name>
    <name type="common">ASFV</name>
    <dbReference type="NCBI Taxonomy" id="561445"/>
    <lineage>
        <taxon>Viruses</taxon>
        <taxon>Varidnaviria</taxon>
        <taxon>Bamfordvirae</taxon>
        <taxon>Nucleocytoviricota</taxon>
        <taxon>Pokkesviricetes</taxon>
        <taxon>Asfuvirales</taxon>
        <taxon>Asfarviridae</taxon>
        <taxon>Asfivirus</taxon>
        <taxon>African swine fever virus</taxon>
    </lineage>
</organism>
<organismHost>
    <name type="scientific">Ornithodoros</name>
    <name type="common">relapsing fever ticks</name>
    <dbReference type="NCBI Taxonomy" id="6937"/>
</organismHost>
<organismHost>
    <name type="scientific">Phacochoerus aethiopicus</name>
    <name type="common">Warthog</name>
    <dbReference type="NCBI Taxonomy" id="85517"/>
</organismHost>
<organismHost>
    <name type="scientific">Phacochoerus africanus</name>
    <name type="common">Warthog</name>
    <dbReference type="NCBI Taxonomy" id="41426"/>
</organismHost>
<organismHost>
    <name type="scientific">Potamochoerus larvatus</name>
    <name type="common">Bushpig</name>
    <dbReference type="NCBI Taxonomy" id="273792"/>
</organismHost>
<organismHost>
    <name type="scientific">Sus scrofa</name>
    <name type="common">Pig</name>
    <dbReference type="NCBI Taxonomy" id="9823"/>
</organismHost>
<keyword id="KW-0325">Glycoprotein</keyword>
<keyword id="KW-1043">Host membrane</keyword>
<keyword id="KW-0472">Membrane</keyword>
<keyword id="KW-0812">Transmembrane</keyword>
<keyword id="KW-1133">Transmembrane helix</keyword>
<evidence type="ECO:0000250" key="1"/>
<evidence type="ECO:0000255" key="2"/>
<evidence type="ECO:0000305" key="3"/>
<gene>
    <name type="ordered locus">Ken-020</name>
</gene>
<protein>
    <recommendedName>
        <fullName>Protein MGF 110-11L</fullName>
    </recommendedName>
</protein>
<dbReference type="EMBL" id="AY261360">
    <property type="status" value="NOT_ANNOTATED_CDS"/>
    <property type="molecule type" value="Genomic_DNA"/>
</dbReference>
<dbReference type="Proteomes" id="UP000000861">
    <property type="component" value="Segment"/>
</dbReference>
<dbReference type="GO" id="GO:0033644">
    <property type="term" value="C:host cell membrane"/>
    <property type="evidence" value="ECO:0007669"/>
    <property type="project" value="UniProtKB-SubCell"/>
</dbReference>
<dbReference type="GO" id="GO:0016020">
    <property type="term" value="C:membrane"/>
    <property type="evidence" value="ECO:0007669"/>
    <property type="project" value="UniProtKB-KW"/>
</dbReference>
<dbReference type="InterPro" id="IPR004848">
    <property type="entry name" value="ASFV_fam_110"/>
</dbReference>
<dbReference type="Pfam" id="PF01639">
    <property type="entry name" value="v110"/>
    <property type="match status" value="2"/>
</dbReference>
<comment type="function">
    <text evidence="1">Plays a role in virus cell tropism, and may be required for efficient virus replication in macrophages.</text>
</comment>
<comment type="subcellular location">
    <subcellularLocation>
        <location evidence="3">Host membrane</location>
        <topology evidence="3">Multi-pass membrane protein</topology>
    </subcellularLocation>
</comment>
<comment type="similarity">
    <text evidence="3">Belongs to the asfivirus MGF 110 family.</text>
</comment>